<sequence length="405" mass="45498">MYMKKFNKVILAYSGGLDTSIIIPWLKENYGCEVIAVVGNVGQSDELVGLKEKAIKTGASKIYIEDLTKEFVEDYIFPTIQAGAKYEGKYLLGTSFARPIIAKRLVEIAKLEGADAICHGCTGKGNDQVRFELAIKTFNPEMQIIAPWRTWEIKSREEEIQYAIDNEVPINITYETNYSKDKNLWHLSHEGLDLEFPENEPKYDKILELCNTLEKAPNEAEYITLGFEKGIATSLNGEKLDGVTLLQELNKIGGKHGIGVIDMVENRLVGMKSRGVYETPGGSILYKAHKDLEELCLDKETSHYKEIVSLKFADLVYNGQWFTPLREALSAFISKTQETVTGEIKLKLYKGNIINAGMTSPYSLYSEEYATFGEDGIYNQKDAEGFINLFSLPSIVQAKMAQKLN</sequence>
<comment type="catalytic activity">
    <reaction evidence="1">
        <text>L-citrulline + L-aspartate + ATP = 2-(N(omega)-L-arginino)succinate + AMP + diphosphate + H(+)</text>
        <dbReference type="Rhea" id="RHEA:10932"/>
        <dbReference type="ChEBI" id="CHEBI:15378"/>
        <dbReference type="ChEBI" id="CHEBI:29991"/>
        <dbReference type="ChEBI" id="CHEBI:30616"/>
        <dbReference type="ChEBI" id="CHEBI:33019"/>
        <dbReference type="ChEBI" id="CHEBI:57472"/>
        <dbReference type="ChEBI" id="CHEBI:57743"/>
        <dbReference type="ChEBI" id="CHEBI:456215"/>
        <dbReference type="EC" id="6.3.4.5"/>
    </reaction>
</comment>
<comment type="pathway">
    <text evidence="1">Amino-acid biosynthesis; L-arginine biosynthesis; L-arginine from L-ornithine and carbamoyl phosphate: step 2/3.</text>
</comment>
<comment type="subunit">
    <text evidence="1">Homotetramer.</text>
</comment>
<comment type="subcellular location">
    <subcellularLocation>
        <location evidence="1">Cytoplasm</location>
    </subcellularLocation>
</comment>
<comment type="similarity">
    <text evidence="1">Belongs to the argininosuccinate synthase family. Type 1 subfamily.</text>
</comment>
<dbReference type="EC" id="6.3.4.5" evidence="1"/>
<dbReference type="EMBL" id="BA000016">
    <property type="protein sequence ID" value="BAB80397.1"/>
    <property type="molecule type" value="Genomic_DNA"/>
</dbReference>
<dbReference type="SMR" id="Q8XMJ7"/>
<dbReference type="STRING" id="195102.gene:10489953"/>
<dbReference type="KEGG" id="cpe:CPE0691"/>
<dbReference type="HOGENOM" id="CLU_032784_4_2_9"/>
<dbReference type="UniPathway" id="UPA00068">
    <property type="reaction ID" value="UER00113"/>
</dbReference>
<dbReference type="Proteomes" id="UP000000818">
    <property type="component" value="Chromosome"/>
</dbReference>
<dbReference type="GO" id="GO:0005737">
    <property type="term" value="C:cytoplasm"/>
    <property type="evidence" value="ECO:0007669"/>
    <property type="project" value="UniProtKB-SubCell"/>
</dbReference>
<dbReference type="GO" id="GO:0004055">
    <property type="term" value="F:argininosuccinate synthase activity"/>
    <property type="evidence" value="ECO:0007669"/>
    <property type="project" value="UniProtKB-UniRule"/>
</dbReference>
<dbReference type="GO" id="GO:0005524">
    <property type="term" value="F:ATP binding"/>
    <property type="evidence" value="ECO:0007669"/>
    <property type="project" value="UniProtKB-UniRule"/>
</dbReference>
<dbReference type="GO" id="GO:0000053">
    <property type="term" value="P:argininosuccinate metabolic process"/>
    <property type="evidence" value="ECO:0007669"/>
    <property type="project" value="TreeGrafter"/>
</dbReference>
<dbReference type="GO" id="GO:0006526">
    <property type="term" value="P:L-arginine biosynthetic process"/>
    <property type="evidence" value="ECO:0007669"/>
    <property type="project" value="UniProtKB-UniRule"/>
</dbReference>
<dbReference type="GO" id="GO:0000050">
    <property type="term" value="P:urea cycle"/>
    <property type="evidence" value="ECO:0007669"/>
    <property type="project" value="TreeGrafter"/>
</dbReference>
<dbReference type="CDD" id="cd01999">
    <property type="entry name" value="ASS"/>
    <property type="match status" value="1"/>
</dbReference>
<dbReference type="FunFam" id="3.40.50.620:FF:000019">
    <property type="entry name" value="Argininosuccinate synthase"/>
    <property type="match status" value="1"/>
</dbReference>
<dbReference type="FunFam" id="3.90.1260.10:FF:000007">
    <property type="entry name" value="Argininosuccinate synthase"/>
    <property type="match status" value="1"/>
</dbReference>
<dbReference type="Gene3D" id="3.90.1260.10">
    <property type="entry name" value="Argininosuccinate synthetase, chain A, domain 2"/>
    <property type="match status" value="1"/>
</dbReference>
<dbReference type="Gene3D" id="3.40.50.620">
    <property type="entry name" value="HUPs"/>
    <property type="match status" value="1"/>
</dbReference>
<dbReference type="Gene3D" id="1.20.5.470">
    <property type="entry name" value="Single helix bin"/>
    <property type="match status" value="1"/>
</dbReference>
<dbReference type="HAMAP" id="MF_00005">
    <property type="entry name" value="Arg_succ_synth_type1"/>
    <property type="match status" value="1"/>
</dbReference>
<dbReference type="InterPro" id="IPR048268">
    <property type="entry name" value="Arginosuc_syn_C"/>
</dbReference>
<dbReference type="InterPro" id="IPR048267">
    <property type="entry name" value="Arginosuc_syn_N"/>
</dbReference>
<dbReference type="InterPro" id="IPR001518">
    <property type="entry name" value="Arginosuc_synth"/>
</dbReference>
<dbReference type="InterPro" id="IPR018223">
    <property type="entry name" value="Arginosuc_synth_CS"/>
</dbReference>
<dbReference type="InterPro" id="IPR023434">
    <property type="entry name" value="Arginosuc_synth_type_1_subfam"/>
</dbReference>
<dbReference type="InterPro" id="IPR024074">
    <property type="entry name" value="AS_cat/multimer_dom_body"/>
</dbReference>
<dbReference type="InterPro" id="IPR014729">
    <property type="entry name" value="Rossmann-like_a/b/a_fold"/>
</dbReference>
<dbReference type="NCBIfam" id="TIGR00032">
    <property type="entry name" value="argG"/>
    <property type="match status" value="1"/>
</dbReference>
<dbReference type="NCBIfam" id="NF001770">
    <property type="entry name" value="PRK00509.1"/>
    <property type="match status" value="1"/>
</dbReference>
<dbReference type="PANTHER" id="PTHR11587">
    <property type="entry name" value="ARGININOSUCCINATE SYNTHASE"/>
    <property type="match status" value="1"/>
</dbReference>
<dbReference type="PANTHER" id="PTHR11587:SF2">
    <property type="entry name" value="ARGININOSUCCINATE SYNTHASE"/>
    <property type="match status" value="1"/>
</dbReference>
<dbReference type="Pfam" id="PF20979">
    <property type="entry name" value="Arginosuc_syn_C"/>
    <property type="match status" value="1"/>
</dbReference>
<dbReference type="Pfam" id="PF00764">
    <property type="entry name" value="Arginosuc_synth"/>
    <property type="match status" value="1"/>
</dbReference>
<dbReference type="SUPFAM" id="SSF52402">
    <property type="entry name" value="Adenine nucleotide alpha hydrolases-like"/>
    <property type="match status" value="1"/>
</dbReference>
<dbReference type="SUPFAM" id="SSF69864">
    <property type="entry name" value="Argininosuccinate synthetase, C-terminal domain"/>
    <property type="match status" value="1"/>
</dbReference>
<dbReference type="PROSITE" id="PS00564">
    <property type="entry name" value="ARGININOSUCCIN_SYN_1"/>
    <property type="match status" value="1"/>
</dbReference>
<dbReference type="PROSITE" id="PS00565">
    <property type="entry name" value="ARGININOSUCCIN_SYN_2"/>
    <property type="match status" value="1"/>
</dbReference>
<proteinExistence type="inferred from homology"/>
<feature type="chain" id="PRO_0000148586" description="Argininosuccinate synthase">
    <location>
        <begin position="1"/>
        <end position="405"/>
    </location>
</feature>
<feature type="binding site" evidence="1">
    <location>
        <begin position="12"/>
        <end position="20"/>
    </location>
    <ligand>
        <name>ATP</name>
        <dbReference type="ChEBI" id="CHEBI:30616"/>
    </ligand>
</feature>
<feature type="binding site" evidence="1">
    <location>
        <position position="90"/>
    </location>
    <ligand>
        <name>L-citrulline</name>
        <dbReference type="ChEBI" id="CHEBI:57743"/>
    </ligand>
</feature>
<feature type="binding site" evidence="1">
    <location>
        <position position="95"/>
    </location>
    <ligand>
        <name>L-citrulline</name>
        <dbReference type="ChEBI" id="CHEBI:57743"/>
    </ligand>
</feature>
<feature type="binding site" evidence="1">
    <location>
        <position position="120"/>
    </location>
    <ligand>
        <name>ATP</name>
        <dbReference type="ChEBI" id="CHEBI:30616"/>
    </ligand>
</feature>
<feature type="binding site" evidence="1">
    <location>
        <position position="122"/>
    </location>
    <ligand>
        <name>L-aspartate</name>
        <dbReference type="ChEBI" id="CHEBI:29991"/>
    </ligand>
</feature>
<feature type="binding site" evidence="1">
    <location>
        <position position="126"/>
    </location>
    <ligand>
        <name>L-aspartate</name>
        <dbReference type="ChEBI" id="CHEBI:29991"/>
    </ligand>
</feature>
<feature type="binding site" evidence="1">
    <location>
        <position position="126"/>
    </location>
    <ligand>
        <name>L-citrulline</name>
        <dbReference type="ChEBI" id="CHEBI:57743"/>
    </ligand>
</feature>
<feature type="binding site" evidence="1">
    <location>
        <position position="127"/>
    </location>
    <ligand>
        <name>L-aspartate</name>
        <dbReference type="ChEBI" id="CHEBI:29991"/>
    </ligand>
</feature>
<feature type="binding site" evidence="1">
    <location>
        <position position="130"/>
    </location>
    <ligand>
        <name>L-citrulline</name>
        <dbReference type="ChEBI" id="CHEBI:57743"/>
    </ligand>
</feature>
<feature type="binding site" evidence="1">
    <location>
        <position position="179"/>
    </location>
    <ligand>
        <name>L-citrulline</name>
        <dbReference type="ChEBI" id="CHEBI:57743"/>
    </ligand>
</feature>
<feature type="binding site" evidence="1">
    <location>
        <position position="188"/>
    </location>
    <ligand>
        <name>L-citrulline</name>
        <dbReference type="ChEBI" id="CHEBI:57743"/>
    </ligand>
</feature>
<feature type="binding site" evidence="1">
    <location>
        <position position="265"/>
    </location>
    <ligand>
        <name>L-citrulline</name>
        <dbReference type="ChEBI" id="CHEBI:57743"/>
    </ligand>
</feature>
<feature type="binding site" evidence="1">
    <location>
        <position position="277"/>
    </location>
    <ligand>
        <name>L-citrulline</name>
        <dbReference type="ChEBI" id="CHEBI:57743"/>
    </ligand>
</feature>
<gene>
    <name evidence="1" type="primary">argG</name>
    <name type="ordered locus">CPE0691</name>
</gene>
<name>ASSY_CLOPE</name>
<protein>
    <recommendedName>
        <fullName evidence="1">Argininosuccinate synthase</fullName>
        <ecNumber evidence="1">6.3.4.5</ecNumber>
    </recommendedName>
    <alternativeName>
        <fullName evidence="1">Citrulline--aspartate ligase</fullName>
    </alternativeName>
</protein>
<accession>Q8XMJ7</accession>
<keyword id="KW-0028">Amino-acid biosynthesis</keyword>
<keyword id="KW-0055">Arginine biosynthesis</keyword>
<keyword id="KW-0067">ATP-binding</keyword>
<keyword id="KW-0963">Cytoplasm</keyword>
<keyword id="KW-0436">Ligase</keyword>
<keyword id="KW-0547">Nucleotide-binding</keyword>
<keyword id="KW-1185">Reference proteome</keyword>
<evidence type="ECO:0000255" key="1">
    <source>
        <dbReference type="HAMAP-Rule" id="MF_00005"/>
    </source>
</evidence>
<reference key="1">
    <citation type="journal article" date="2002" name="Proc. Natl. Acad. Sci. U.S.A.">
        <title>Complete genome sequence of Clostridium perfringens, an anaerobic flesh-eater.</title>
        <authorList>
            <person name="Shimizu T."/>
            <person name="Ohtani K."/>
            <person name="Hirakawa H."/>
            <person name="Ohshima K."/>
            <person name="Yamashita A."/>
            <person name="Shiba T."/>
            <person name="Ogasawara N."/>
            <person name="Hattori M."/>
            <person name="Kuhara S."/>
            <person name="Hayashi H."/>
        </authorList>
    </citation>
    <scope>NUCLEOTIDE SEQUENCE [LARGE SCALE GENOMIC DNA]</scope>
    <source>
        <strain>13 / Type A</strain>
    </source>
</reference>
<organism>
    <name type="scientific">Clostridium perfringens (strain 13 / Type A)</name>
    <dbReference type="NCBI Taxonomy" id="195102"/>
    <lineage>
        <taxon>Bacteria</taxon>
        <taxon>Bacillati</taxon>
        <taxon>Bacillota</taxon>
        <taxon>Clostridia</taxon>
        <taxon>Eubacteriales</taxon>
        <taxon>Clostridiaceae</taxon>
        <taxon>Clostridium</taxon>
    </lineage>
</organism>